<organism>
    <name type="scientific">Rickettsia conorii (strain ATCC VR-613 / Malish 7)</name>
    <dbReference type="NCBI Taxonomy" id="272944"/>
    <lineage>
        <taxon>Bacteria</taxon>
        <taxon>Pseudomonadati</taxon>
        <taxon>Pseudomonadota</taxon>
        <taxon>Alphaproteobacteria</taxon>
        <taxon>Rickettsiales</taxon>
        <taxon>Rickettsiaceae</taxon>
        <taxon>Rickettsieae</taxon>
        <taxon>Rickettsia</taxon>
        <taxon>spotted fever group</taxon>
    </lineage>
</organism>
<protein>
    <recommendedName>
        <fullName>Putative adhesin RC1281</fullName>
    </recommendedName>
</protein>
<keyword id="KW-0732">Signal</keyword>
<accession>Q92G43</accession>
<dbReference type="EMBL" id="AE006914">
    <property type="protein sequence ID" value="AAL03819.1"/>
    <property type="molecule type" value="Genomic_DNA"/>
</dbReference>
<dbReference type="PIR" id="A97860">
    <property type="entry name" value="A97860"/>
</dbReference>
<dbReference type="RefSeq" id="WP_010977843.1">
    <property type="nucleotide sequence ID" value="NC_003103.1"/>
</dbReference>
<dbReference type="SMR" id="Q92G43"/>
<dbReference type="GeneID" id="928434"/>
<dbReference type="KEGG" id="rco:RC1281"/>
<dbReference type="PATRIC" id="fig|272944.4.peg.1473"/>
<dbReference type="HOGENOM" id="CLU_1146500_0_0_5"/>
<dbReference type="Proteomes" id="UP000000816">
    <property type="component" value="Chromosome"/>
</dbReference>
<dbReference type="Gene3D" id="2.40.160.20">
    <property type="match status" value="1"/>
</dbReference>
<dbReference type="InterPro" id="IPR011250">
    <property type="entry name" value="OMP/PagP_b-brl"/>
</dbReference>
<dbReference type="InterPro" id="IPR027385">
    <property type="entry name" value="OMP_b-brl"/>
</dbReference>
<dbReference type="Pfam" id="PF13505">
    <property type="entry name" value="OMP_b-brl"/>
    <property type="match status" value="1"/>
</dbReference>
<dbReference type="SUPFAM" id="SSF56925">
    <property type="entry name" value="OMPA-like"/>
    <property type="match status" value="1"/>
</dbReference>
<sequence length="249" mass="26877">MKKLLLIAAASTALLTSGLSFADCDMNSSVDSSTNSSMSSSVENQWYLKLNAGGVIFNKTKPKGADFKLNNIKSNIKSNTGFTGEIGAGYYIMDNLRTDLTIGTVASSHLKKSKTYPDGNSFSVKNKPTIVSVLLNGYVDFVDLSMFKVFAGAGVGAAFVKEKIHSKDIKGGVTDTFNGTTKNKTNFAYQLSLGTSFEVAQGVKAELVYSWRDYGKTKNTTKTINGDKVKFGGTHYKGHNLMAGLRFDM</sequence>
<feature type="signal peptide" evidence="1">
    <location>
        <begin position="1"/>
        <end position="22"/>
    </location>
</feature>
<feature type="chain" id="PRO_0000317017" description="Putative adhesin RC1281">
    <location>
        <begin position="23"/>
        <end position="249"/>
    </location>
</feature>
<reference key="1">
    <citation type="journal article" date="2001" name="Science">
        <title>Mechanisms of evolution in Rickettsia conorii and R. prowazekii.</title>
        <authorList>
            <person name="Ogata H."/>
            <person name="Audic S."/>
            <person name="Renesto-Audiffren P."/>
            <person name="Fournier P.-E."/>
            <person name="Barbe V."/>
            <person name="Samson D."/>
            <person name="Roux V."/>
            <person name="Cossart P."/>
            <person name="Weissenbach J."/>
            <person name="Claverie J.-M."/>
            <person name="Raoult D."/>
        </authorList>
    </citation>
    <scope>NUCLEOTIDE SEQUENCE [LARGE SCALE GENOMIC DNA]</scope>
    <source>
        <strain>ATCC VR-613 / Malish 7</strain>
    </source>
</reference>
<reference key="2">
    <citation type="journal article" date="2006" name="Res. Microbiol.">
        <title>Identification of two putative rickettsial adhesins by proteomic analysis.</title>
        <authorList>
            <person name="Renesto P."/>
            <person name="Samson L."/>
            <person name="Ogata H."/>
            <person name="Azza S."/>
            <person name="Fourquet P."/>
            <person name="Gorvel J.-P."/>
            <person name="Heinzen R.A."/>
            <person name="Raoult D."/>
        </authorList>
    </citation>
    <scope>IDENTIFICATION BY MASS SPECTROMETRY</scope>
    <scope>ADHESION TO BIOTINYLATED EUKARYOTIC CELLS</scope>
    <source>
        <strain>ATCC VR-613 / Malish 7</strain>
    </source>
</reference>
<evidence type="ECO:0000255" key="1"/>
<gene>
    <name type="ordered locus">RC1281</name>
</gene>
<proteinExistence type="evidence at protein level"/>
<name>Y1281_RICCN</name>
<comment type="function">
    <text>Adheres to biotinylated epithelial (Vero cell) proteins.</text>
</comment>